<feature type="chain" id="PRO_1000006383" description="Glycine--tRNA ligase beta subunit">
    <location>
        <begin position="1"/>
        <end position="689"/>
    </location>
</feature>
<proteinExistence type="inferred from homology"/>
<keyword id="KW-0030">Aminoacyl-tRNA synthetase</keyword>
<keyword id="KW-0067">ATP-binding</keyword>
<keyword id="KW-0963">Cytoplasm</keyword>
<keyword id="KW-0436">Ligase</keyword>
<keyword id="KW-0547">Nucleotide-binding</keyword>
<keyword id="KW-0648">Protein biosynthesis</keyword>
<keyword id="KW-1185">Reference proteome</keyword>
<comment type="catalytic activity">
    <reaction evidence="1">
        <text>tRNA(Gly) + glycine + ATP = glycyl-tRNA(Gly) + AMP + diphosphate</text>
        <dbReference type="Rhea" id="RHEA:16013"/>
        <dbReference type="Rhea" id="RHEA-COMP:9664"/>
        <dbReference type="Rhea" id="RHEA-COMP:9683"/>
        <dbReference type="ChEBI" id="CHEBI:30616"/>
        <dbReference type="ChEBI" id="CHEBI:33019"/>
        <dbReference type="ChEBI" id="CHEBI:57305"/>
        <dbReference type="ChEBI" id="CHEBI:78442"/>
        <dbReference type="ChEBI" id="CHEBI:78522"/>
        <dbReference type="ChEBI" id="CHEBI:456215"/>
        <dbReference type="EC" id="6.1.1.14"/>
    </reaction>
</comment>
<comment type="subunit">
    <text evidence="1">Tetramer of two alpha and two beta subunits.</text>
</comment>
<comment type="subcellular location">
    <subcellularLocation>
        <location evidence="1">Cytoplasm</location>
    </subcellularLocation>
</comment>
<comment type="similarity">
    <text evidence="1">Belongs to the class-II aminoacyl-tRNA synthetase family.</text>
</comment>
<evidence type="ECO:0000255" key="1">
    <source>
        <dbReference type="HAMAP-Rule" id="MF_00255"/>
    </source>
</evidence>
<dbReference type="EC" id="6.1.1.14" evidence="1"/>
<dbReference type="EMBL" id="BX571859">
    <property type="protein sequence ID" value="CAE12589.1"/>
    <property type="molecule type" value="Genomic_DNA"/>
</dbReference>
<dbReference type="RefSeq" id="WP_011144692.1">
    <property type="nucleotide sequence ID" value="NC_005126.1"/>
</dbReference>
<dbReference type="SMR" id="Q7MB99"/>
<dbReference type="STRING" id="243265.plu0294"/>
<dbReference type="GeneID" id="48846585"/>
<dbReference type="KEGG" id="plu:plu0294"/>
<dbReference type="eggNOG" id="COG0751">
    <property type="taxonomic scope" value="Bacteria"/>
</dbReference>
<dbReference type="HOGENOM" id="CLU_007220_2_2_6"/>
<dbReference type="OrthoDB" id="9775440at2"/>
<dbReference type="Proteomes" id="UP000002514">
    <property type="component" value="Chromosome"/>
</dbReference>
<dbReference type="GO" id="GO:0005829">
    <property type="term" value="C:cytosol"/>
    <property type="evidence" value="ECO:0007669"/>
    <property type="project" value="TreeGrafter"/>
</dbReference>
<dbReference type="GO" id="GO:0004814">
    <property type="term" value="F:arginine-tRNA ligase activity"/>
    <property type="evidence" value="ECO:0007669"/>
    <property type="project" value="InterPro"/>
</dbReference>
<dbReference type="GO" id="GO:0005524">
    <property type="term" value="F:ATP binding"/>
    <property type="evidence" value="ECO:0007669"/>
    <property type="project" value="UniProtKB-UniRule"/>
</dbReference>
<dbReference type="GO" id="GO:0004820">
    <property type="term" value="F:glycine-tRNA ligase activity"/>
    <property type="evidence" value="ECO:0007669"/>
    <property type="project" value="UniProtKB-UniRule"/>
</dbReference>
<dbReference type="GO" id="GO:0006420">
    <property type="term" value="P:arginyl-tRNA aminoacylation"/>
    <property type="evidence" value="ECO:0007669"/>
    <property type="project" value="InterPro"/>
</dbReference>
<dbReference type="GO" id="GO:0006426">
    <property type="term" value="P:glycyl-tRNA aminoacylation"/>
    <property type="evidence" value="ECO:0007669"/>
    <property type="project" value="UniProtKB-UniRule"/>
</dbReference>
<dbReference type="Gene3D" id="1.10.730.10">
    <property type="entry name" value="Isoleucyl-tRNA Synthetase, Domain 1"/>
    <property type="match status" value="1"/>
</dbReference>
<dbReference type="HAMAP" id="MF_00255">
    <property type="entry name" value="Gly_tRNA_synth_beta"/>
    <property type="match status" value="1"/>
</dbReference>
<dbReference type="InterPro" id="IPR008909">
    <property type="entry name" value="DALR_anticod-bd"/>
</dbReference>
<dbReference type="InterPro" id="IPR015944">
    <property type="entry name" value="Gly-tRNA-synth_bsu"/>
</dbReference>
<dbReference type="InterPro" id="IPR006194">
    <property type="entry name" value="Gly-tRNA-synth_heterodimer"/>
</dbReference>
<dbReference type="NCBIfam" id="TIGR00211">
    <property type="entry name" value="glyS"/>
    <property type="match status" value="1"/>
</dbReference>
<dbReference type="PANTHER" id="PTHR30075:SF2">
    <property type="entry name" value="GLYCINE--TRNA LIGASE, CHLOROPLASTIC_MITOCHONDRIAL 2"/>
    <property type="match status" value="1"/>
</dbReference>
<dbReference type="PANTHER" id="PTHR30075">
    <property type="entry name" value="GLYCYL-TRNA SYNTHETASE"/>
    <property type="match status" value="1"/>
</dbReference>
<dbReference type="Pfam" id="PF05746">
    <property type="entry name" value="DALR_1"/>
    <property type="match status" value="1"/>
</dbReference>
<dbReference type="Pfam" id="PF02092">
    <property type="entry name" value="tRNA_synt_2f"/>
    <property type="match status" value="1"/>
</dbReference>
<dbReference type="PRINTS" id="PR01045">
    <property type="entry name" value="TRNASYNTHGB"/>
</dbReference>
<dbReference type="SUPFAM" id="SSF109604">
    <property type="entry name" value="HD-domain/PDEase-like"/>
    <property type="match status" value="1"/>
</dbReference>
<dbReference type="PROSITE" id="PS50861">
    <property type="entry name" value="AA_TRNA_LIGASE_II_GLYAB"/>
    <property type="match status" value="1"/>
</dbReference>
<organism>
    <name type="scientific">Photorhabdus laumondii subsp. laumondii (strain DSM 15139 / CIP 105565 / TT01)</name>
    <name type="common">Photorhabdus luminescens subsp. laumondii</name>
    <dbReference type="NCBI Taxonomy" id="243265"/>
    <lineage>
        <taxon>Bacteria</taxon>
        <taxon>Pseudomonadati</taxon>
        <taxon>Pseudomonadota</taxon>
        <taxon>Gammaproteobacteria</taxon>
        <taxon>Enterobacterales</taxon>
        <taxon>Morganellaceae</taxon>
        <taxon>Photorhabdus</taxon>
    </lineage>
</organism>
<protein>
    <recommendedName>
        <fullName evidence="1">Glycine--tRNA ligase beta subunit</fullName>
        <ecNumber evidence="1">6.1.1.14</ecNumber>
    </recommendedName>
    <alternativeName>
        <fullName evidence="1">Glycyl-tRNA synthetase beta subunit</fullName>
        <shortName evidence="1">GlyRS</shortName>
    </alternativeName>
</protein>
<reference key="1">
    <citation type="journal article" date="2003" name="Nat. Biotechnol.">
        <title>The genome sequence of the entomopathogenic bacterium Photorhabdus luminescens.</title>
        <authorList>
            <person name="Duchaud E."/>
            <person name="Rusniok C."/>
            <person name="Frangeul L."/>
            <person name="Buchrieser C."/>
            <person name="Givaudan A."/>
            <person name="Taourit S."/>
            <person name="Bocs S."/>
            <person name="Boursaux-Eude C."/>
            <person name="Chandler M."/>
            <person name="Charles J.-F."/>
            <person name="Dassa E."/>
            <person name="Derose R."/>
            <person name="Derzelle S."/>
            <person name="Freyssinet G."/>
            <person name="Gaudriault S."/>
            <person name="Medigue C."/>
            <person name="Lanois A."/>
            <person name="Powell K."/>
            <person name="Siguier P."/>
            <person name="Vincent R."/>
            <person name="Wingate V."/>
            <person name="Zouine M."/>
            <person name="Glaser P."/>
            <person name="Boemare N."/>
            <person name="Danchin A."/>
            <person name="Kunst F."/>
        </authorList>
    </citation>
    <scope>NUCLEOTIDE SEQUENCE [LARGE SCALE GENOMIC DNA]</scope>
    <source>
        <strain>DSM 15139 / CIP 105565 / TT01</strain>
    </source>
</reference>
<gene>
    <name evidence="1" type="primary">glyS</name>
    <name type="ordered locus">plu0294</name>
</gene>
<name>SYGB_PHOLL</name>
<sequence length="689" mass="76851">MTQQTFLVEIGTEELPPKALRSLAEAFAANFAAELDNANLAYGEISWFATPRRLALKVANLDEAQADREVEKRGPAIAQAFDTEGKPTKAAEGWARGCGITAAQAERLVTDKGEWLLYRALVKGRSVKELLAAMVNSALNKLPIPKLMRWSDKETQFARPVHTVTMLFGDELIEGEILGIKSARVIRGHRFMGESEFAIDNAEQYPEILQQRGRVLADYTTRKVLIKQDVEQAAIKLGGVADISDSLLEEVTSLVEWPVVLTAKFEEKFLEVPAEALVYTMKGDQKYFPVYDNAGKLMANFIFVANIDSSDPQQIIDGNEKVVRPRLADAEFFFKTDRKQRLEDNLPRLETVLFQKQLGTLRDKTDRIQALAGWIAEKIGADVNHATRAGLLSKCDLMTNMVFEFTDTQGVMGMHYARHDGEAEDVALALNEQYQPRFAGDELPSTGVSCALAIADKMDTLAGIFGIGQHPRGDKDPFALRRAALGALRIIVEKKLPLDLQTLTEEAVRLYGDKLTNAKVTDDVVEFMLGRFRAWYQEQGYRVDTIQAVLARRPTQPADFDARVKAVTHFRTLDEAAALAAANKRVSNILAKSEETLNEKVDVSTLKAPEEVKLATHLIVLQDKLAPLFAEGHYQEALVELASLREVVDAFFDNVMVMDEDLQVRVNRLTLLSELRDLFLRVADISLLQ</sequence>
<accession>Q7MB99</accession>